<dbReference type="EC" id="2.7.4.25" evidence="1"/>
<dbReference type="EMBL" id="CP001113">
    <property type="protein sequence ID" value="ACF65207.1"/>
    <property type="molecule type" value="Genomic_DNA"/>
</dbReference>
<dbReference type="RefSeq" id="WP_000125007.1">
    <property type="nucleotide sequence ID" value="NZ_CCMR01000003.1"/>
</dbReference>
<dbReference type="SMR" id="B4T144"/>
<dbReference type="KEGG" id="see:SNSL254_A1013"/>
<dbReference type="HOGENOM" id="CLU_079959_0_2_6"/>
<dbReference type="Proteomes" id="UP000008824">
    <property type="component" value="Chromosome"/>
</dbReference>
<dbReference type="GO" id="GO:0005829">
    <property type="term" value="C:cytosol"/>
    <property type="evidence" value="ECO:0007669"/>
    <property type="project" value="TreeGrafter"/>
</dbReference>
<dbReference type="GO" id="GO:0005524">
    <property type="term" value="F:ATP binding"/>
    <property type="evidence" value="ECO:0007669"/>
    <property type="project" value="UniProtKB-UniRule"/>
</dbReference>
<dbReference type="GO" id="GO:0036430">
    <property type="term" value="F:CMP kinase activity"/>
    <property type="evidence" value="ECO:0007669"/>
    <property type="project" value="RHEA"/>
</dbReference>
<dbReference type="GO" id="GO:0036431">
    <property type="term" value="F:dCMP kinase activity"/>
    <property type="evidence" value="ECO:0007669"/>
    <property type="project" value="RHEA"/>
</dbReference>
<dbReference type="GO" id="GO:0015949">
    <property type="term" value="P:nucleobase-containing small molecule interconversion"/>
    <property type="evidence" value="ECO:0007669"/>
    <property type="project" value="TreeGrafter"/>
</dbReference>
<dbReference type="GO" id="GO:0006220">
    <property type="term" value="P:pyrimidine nucleotide metabolic process"/>
    <property type="evidence" value="ECO:0007669"/>
    <property type="project" value="UniProtKB-UniRule"/>
</dbReference>
<dbReference type="CDD" id="cd02020">
    <property type="entry name" value="CMPK"/>
    <property type="match status" value="1"/>
</dbReference>
<dbReference type="FunFam" id="3.40.50.300:FF:000262">
    <property type="entry name" value="Cytidylate kinase"/>
    <property type="match status" value="1"/>
</dbReference>
<dbReference type="Gene3D" id="3.40.50.300">
    <property type="entry name" value="P-loop containing nucleotide triphosphate hydrolases"/>
    <property type="match status" value="1"/>
</dbReference>
<dbReference type="HAMAP" id="MF_00238">
    <property type="entry name" value="Cytidyl_kinase_type1"/>
    <property type="match status" value="1"/>
</dbReference>
<dbReference type="InterPro" id="IPR003136">
    <property type="entry name" value="Cytidylate_kin"/>
</dbReference>
<dbReference type="InterPro" id="IPR011994">
    <property type="entry name" value="Cytidylate_kinase_dom"/>
</dbReference>
<dbReference type="InterPro" id="IPR027417">
    <property type="entry name" value="P-loop_NTPase"/>
</dbReference>
<dbReference type="NCBIfam" id="TIGR00017">
    <property type="entry name" value="cmk"/>
    <property type="match status" value="1"/>
</dbReference>
<dbReference type="PANTHER" id="PTHR21299:SF2">
    <property type="entry name" value="CYTIDYLATE KINASE"/>
    <property type="match status" value="1"/>
</dbReference>
<dbReference type="PANTHER" id="PTHR21299">
    <property type="entry name" value="CYTIDYLATE KINASE/PANTOATE-BETA-ALANINE LIGASE"/>
    <property type="match status" value="1"/>
</dbReference>
<dbReference type="Pfam" id="PF02224">
    <property type="entry name" value="Cytidylate_kin"/>
    <property type="match status" value="1"/>
</dbReference>
<dbReference type="SUPFAM" id="SSF52540">
    <property type="entry name" value="P-loop containing nucleoside triphosphate hydrolases"/>
    <property type="match status" value="1"/>
</dbReference>
<gene>
    <name evidence="1" type="primary">cmk</name>
    <name type="ordered locus">SNSL254_A1013</name>
</gene>
<comment type="catalytic activity">
    <reaction evidence="1">
        <text>CMP + ATP = CDP + ADP</text>
        <dbReference type="Rhea" id="RHEA:11600"/>
        <dbReference type="ChEBI" id="CHEBI:30616"/>
        <dbReference type="ChEBI" id="CHEBI:58069"/>
        <dbReference type="ChEBI" id="CHEBI:60377"/>
        <dbReference type="ChEBI" id="CHEBI:456216"/>
        <dbReference type="EC" id="2.7.4.25"/>
    </reaction>
</comment>
<comment type="catalytic activity">
    <reaction evidence="1">
        <text>dCMP + ATP = dCDP + ADP</text>
        <dbReference type="Rhea" id="RHEA:25094"/>
        <dbReference type="ChEBI" id="CHEBI:30616"/>
        <dbReference type="ChEBI" id="CHEBI:57566"/>
        <dbReference type="ChEBI" id="CHEBI:58593"/>
        <dbReference type="ChEBI" id="CHEBI:456216"/>
        <dbReference type="EC" id="2.7.4.25"/>
    </reaction>
</comment>
<comment type="subcellular location">
    <subcellularLocation>
        <location evidence="1">Cytoplasm</location>
    </subcellularLocation>
</comment>
<comment type="similarity">
    <text evidence="1">Belongs to the cytidylate kinase family. Type 1 subfamily.</text>
</comment>
<accession>B4T144</accession>
<sequence>MTAIAPVITIDGPSGAGKGTLCKAMAEALQWHLLDSGAIYRVLALAALHHHVDLASEDALVPLASHLDVRFVSTDGNLEVILEGEDVSGEIRTQEVANAASQVAAFPRVREALLRRQRAFREAPGLIADGRDMGTVVFPDAPVKIFLDASSEERAHRRMLQLQENGFSVNFERLLAEIKERDDRDRNRAVAPLVPAADALVLDSTRLSIEQVIEKALQYARQKLALA</sequence>
<organism>
    <name type="scientific">Salmonella newport (strain SL254)</name>
    <dbReference type="NCBI Taxonomy" id="423368"/>
    <lineage>
        <taxon>Bacteria</taxon>
        <taxon>Pseudomonadati</taxon>
        <taxon>Pseudomonadota</taxon>
        <taxon>Gammaproteobacteria</taxon>
        <taxon>Enterobacterales</taxon>
        <taxon>Enterobacteriaceae</taxon>
        <taxon>Salmonella</taxon>
    </lineage>
</organism>
<reference key="1">
    <citation type="journal article" date="2011" name="J. Bacteriol.">
        <title>Comparative genomics of 28 Salmonella enterica isolates: evidence for CRISPR-mediated adaptive sublineage evolution.</title>
        <authorList>
            <person name="Fricke W.F."/>
            <person name="Mammel M.K."/>
            <person name="McDermott P.F."/>
            <person name="Tartera C."/>
            <person name="White D.G."/>
            <person name="Leclerc J.E."/>
            <person name="Ravel J."/>
            <person name="Cebula T.A."/>
        </authorList>
    </citation>
    <scope>NUCLEOTIDE SEQUENCE [LARGE SCALE GENOMIC DNA]</scope>
    <source>
        <strain>SL254</strain>
    </source>
</reference>
<proteinExistence type="inferred from homology"/>
<evidence type="ECO:0000255" key="1">
    <source>
        <dbReference type="HAMAP-Rule" id="MF_00238"/>
    </source>
</evidence>
<protein>
    <recommendedName>
        <fullName evidence="1">Cytidylate kinase</fullName>
        <shortName evidence="1">CK</shortName>
        <ecNumber evidence="1">2.7.4.25</ecNumber>
    </recommendedName>
    <alternativeName>
        <fullName evidence="1">Cytidine monophosphate kinase</fullName>
        <shortName evidence="1">CMP kinase</shortName>
    </alternativeName>
</protein>
<name>KCY_SALNS</name>
<keyword id="KW-0067">ATP-binding</keyword>
<keyword id="KW-0963">Cytoplasm</keyword>
<keyword id="KW-0418">Kinase</keyword>
<keyword id="KW-0547">Nucleotide-binding</keyword>
<keyword id="KW-0808">Transferase</keyword>
<feature type="chain" id="PRO_1000100684" description="Cytidylate kinase">
    <location>
        <begin position="1"/>
        <end position="227"/>
    </location>
</feature>
<feature type="binding site" evidence="1">
    <location>
        <begin position="12"/>
        <end position="20"/>
    </location>
    <ligand>
        <name>ATP</name>
        <dbReference type="ChEBI" id="CHEBI:30616"/>
    </ligand>
</feature>